<feature type="signal peptide" evidence="2">
    <location>
        <begin position="1"/>
        <end position="27"/>
    </location>
</feature>
<feature type="chain" id="PRO_0000233048" description="Peptidyl-prolyl cis-trans isomerase B">
    <location>
        <begin position="28"/>
        <end position="248"/>
    </location>
</feature>
<feature type="transmembrane region" description="Helical" evidence="2">
    <location>
        <begin position="219"/>
        <end position="239"/>
    </location>
</feature>
<feature type="domain" description="PPIase cyclophilin-type" evidence="3">
    <location>
        <begin position="38"/>
        <end position="195"/>
    </location>
</feature>
<feature type="glycosylation site" description="N-linked (GlcNAc...) asparagine" evidence="2">
    <location>
        <position position="139"/>
    </location>
</feature>
<feature type="splice variant" id="VSP_044415" description="In isoform Short." evidence="4">
    <original>LVGTSEFAAEEVASAGWSPMQKAGLFAIFAGVLFVGLRSARQHSRF</original>
    <variation>IHVEL</variation>
    <location>
        <begin position="203"/>
        <end position="248"/>
    </location>
</feature>
<evidence type="ECO:0000250" key="1"/>
<evidence type="ECO:0000255" key="2"/>
<evidence type="ECO:0000255" key="3">
    <source>
        <dbReference type="PROSITE-ProRule" id="PRU00156"/>
    </source>
</evidence>
<evidence type="ECO:0000305" key="4"/>
<accession>Q4I5R9</accession>
<accession>A0A0E0SD09</accession>
<accession>I1RTD6</accession>
<accession>V6RHL0</accession>
<comment type="function">
    <text evidence="1">PPIases accelerate the folding of proteins. It catalyzes the cis-trans isomerization of proline imidic peptide bonds in oligopeptides (By similarity).</text>
</comment>
<comment type="catalytic activity">
    <reaction>
        <text>[protein]-peptidylproline (omega=180) = [protein]-peptidylproline (omega=0)</text>
        <dbReference type="Rhea" id="RHEA:16237"/>
        <dbReference type="Rhea" id="RHEA-COMP:10747"/>
        <dbReference type="Rhea" id="RHEA-COMP:10748"/>
        <dbReference type="ChEBI" id="CHEBI:83833"/>
        <dbReference type="ChEBI" id="CHEBI:83834"/>
        <dbReference type="EC" id="5.2.1.8"/>
    </reaction>
</comment>
<comment type="activity regulation">
    <text evidence="1">Inhibited by cyclosporin A (CsA).</text>
</comment>
<comment type="subcellular location">
    <molecule>Isoform Long</molecule>
    <subcellularLocation>
        <location evidence="4">Membrane</location>
        <topology evidence="4">Single-pass membrane protein</topology>
    </subcellularLocation>
</comment>
<comment type="subcellular location">
    <molecule>Isoform Short</molecule>
    <subcellularLocation>
        <location evidence="1">Endoplasmic reticulum lumen</location>
    </subcellularLocation>
</comment>
<comment type="alternative products">
    <event type="alternative splicing"/>
    <isoform>
        <id>Q4I5R9-1</id>
        <name>Long</name>
        <sequence type="displayed"/>
    </isoform>
    <isoform>
        <id>Q4I5R9-2</id>
        <name>Short</name>
        <sequence type="described" ref="VSP_044415"/>
    </isoform>
</comment>
<comment type="miscellaneous">
    <molecule>Isoform Short</molecule>
    <text evidence="4">Lacks the C-terminal transmembrane domain, but has an ER retention motif at its extreme C-terminus.</text>
</comment>
<comment type="similarity">
    <text evidence="4">Belongs to the cyclophilin-type PPIase family. PPIase B subfamily.</text>
</comment>
<organism>
    <name type="scientific">Gibberella zeae (strain ATCC MYA-4620 / CBS 123657 / FGSC 9075 / NRRL 31084 / PH-1)</name>
    <name type="common">Wheat head blight fungus</name>
    <name type="synonym">Fusarium graminearum</name>
    <dbReference type="NCBI Taxonomy" id="229533"/>
    <lineage>
        <taxon>Eukaryota</taxon>
        <taxon>Fungi</taxon>
        <taxon>Dikarya</taxon>
        <taxon>Ascomycota</taxon>
        <taxon>Pezizomycotina</taxon>
        <taxon>Sordariomycetes</taxon>
        <taxon>Hypocreomycetidae</taxon>
        <taxon>Hypocreales</taxon>
        <taxon>Nectriaceae</taxon>
        <taxon>Fusarium</taxon>
    </lineage>
</organism>
<reference key="1">
    <citation type="journal article" date="2007" name="Science">
        <title>The Fusarium graminearum genome reveals a link between localized polymorphism and pathogen specialization.</title>
        <authorList>
            <person name="Cuomo C.A."/>
            <person name="Gueldener U."/>
            <person name="Xu J.-R."/>
            <person name="Trail F."/>
            <person name="Turgeon B.G."/>
            <person name="Di Pietro A."/>
            <person name="Walton J.D."/>
            <person name="Ma L.-J."/>
            <person name="Baker S.E."/>
            <person name="Rep M."/>
            <person name="Adam G."/>
            <person name="Antoniw J."/>
            <person name="Baldwin T."/>
            <person name="Calvo S.E."/>
            <person name="Chang Y.-L."/>
            <person name="DeCaprio D."/>
            <person name="Gale L.R."/>
            <person name="Gnerre S."/>
            <person name="Goswami R.S."/>
            <person name="Hammond-Kosack K."/>
            <person name="Harris L.J."/>
            <person name="Hilburn K."/>
            <person name="Kennell J.C."/>
            <person name="Kroken S."/>
            <person name="Magnuson J.K."/>
            <person name="Mannhaupt G."/>
            <person name="Mauceli E.W."/>
            <person name="Mewes H.-W."/>
            <person name="Mitterbauer R."/>
            <person name="Muehlbauer G."/>
            <person name="Muensterkoetter M."/>
            <person name="Nelson D."/>
            <person name="O'Donnell K."/>
            <person name="Ouellet T."/>
            <person name="Qi W."/>
            <person name="Quesneville H."/>
            <person name="Roncero M.I.G."/>
            <person name="Seong K.-Y."/>
            <person name="Tetko I.V."/>
            <person name="Urban M."/>
            <person name="Waalwijk C."/>
            <person name="Ward T.J."/>
            <person name="Yao J."/>
            <person name="Birren B.W."/>
            <person name="Kistler H.C."/>
        </authorList>
    </citation>
    <scope>NUCLEOTIDE SEQUENCE [LARGE SCALE GENOMIC DNA]</scope>
    <source>
        <strain>ATCC MYA-4620 / CBS 123657 / FGSC 9075 / NRRL 31084 / PH-1</strain>
    </source>
</reference>
<reference key="2">
    <citation type="journal article" date="2010" name="Nature">
        <title>Comparative genomics reveals mobile pathogenicity chromosomes in Fusarium.</title>
        <authorList>
            <person name="Ma L.-J."/>
            <person name="van der Does H.C."/>
            <person name="Borkovich K.A."/>
            <person name="Coleman J.J."/>
            <person name="Daboussi M.-J."/>
            <person name="Di Pietro A."/>
            <person name="Dufresne M."/>
            <person name="Freitag M."/>
            <person name="Grabherr M."/>
            <person name="Henrissat B."/>
            <person name="Houterman P.M."/>
            <person name="Kang S."/>
            <person name="Shim W.-B."/>
            <person name="Woloshuk C."/>
            <person name="Xie X."/>
            <person name="Xu J.-R."/>
            <person name="Antoniw J."/>
            <person name="Baker S.E."/>
            <person name="Bluhm B.H."/>
            <person name="Breakspear A."/>
            <person name="Brown D.W."/>
            <person name="Butchko R.A.E."/>
            <person name="Chapman S."/>
            <person name="Coulson R."/>
            <person name="Coutinho P.M."/>
            <person name="Danchin E.G.J."/>
            <person name="Diener A."/>
            <person name="Gale L.R."/>
            <person name="Gardiner D.M."/>
            <person name="Goff S."/>
            <person name="Hammond-Kosack K.E."/>
            <person name="Hilburn K."/>
            <person name="Hua-Van A."/>
            <person name="Jonkers W."/>
            <person name="Kazan K."/>
            <person name="Kodira C.D."/>
            <person name="Koehrsen M."/>
            <person name="Kumar L."/>
            <person name="Lee Y.-H."/>
            <person name="Li L."/>
            <person name="Manners J.M."/>
            <person name="Miranda-Saavedra D."/>
            <person name="Mukherjee M."/>
            <person name="Park G."/>
            <person name="Park J."/>
            <person name="Park S.-Y."/>
            <person name="Proctor R.H."/>
            <person name="Regev A."/>
            <person name="Ruiz-Roldan M.C."/>
            <person name="Sain D."/>
            <person name="Sakthikumar S."/>
            <person name="Sykes S."/>
            <person name="Schwartz D.C."/>
            <person name="Turgeon B.G."/>
            <person name="Wapinski I."/>
            <person name="Yoder O."/>
            <person name="Young S."/>
            <person name="Zeng Q."/>
            <person name="Zhou S."/>
            <person name="Galagan J."/>
            <person name="Cuomo C.A."/>
            <person name="Kistler H.C."/>
            <person name="Rep M."/>
        </authorList>
    </citation>
    <scope>GENOME REANNOTATION</scope>
    <source>
        <strain>ATCC MYA-4620 / CBS 123657 / FGSC 9075 / NRRL 31084 / PH-1</strain>
    </source>
</reference>
<reference key="3">
    <citation type="journal article" date="2015" name="BMC Genomics">
        <title>The completed genome sequence of the pathogenic ascomycete fungus Fusarium graminearum.</title>
        <authorList>
            <person name="King R."/>
            <person name="Urban M."/>
            <person name="Hammond-Kosack M.C.U."/>
            <person name="Hassani-Pak K."/>
            <person name="Hammond-Kosack K.E."/>
        </authorList>
    </citation>
    <scope>NUCLEOTIDE SEQUENCE [LARGE SCALE GENOMIC DNA]</scope>
    <source>
        <strain>ATCC MYA-4620 / CBS 123657 / FGSC 9075 / NRRL 31084 / PH-1</strain>
    </source>
</reference>
<name>PPIB_GIBZE</name>
<protein>
    <recommendedName>
        <fullName>Peptidyl-prolyl cis-trans isomerase B</fullName>
        <shortName>PPIase B</shortName>
        <ecNumber>5.2.1.8</ecNumber>
    </recommendedName>
    <alternativeName>
        <fullName>Rotamase B</fullName>
    </alternativeName>
</protein>
<proteinExistence type="inferred from homology"/>
<keyword id="KW-0025">Alternative splicing</keyword>
<keyword id="KW-0256">Endoplasmic reticulum</keyword>
<keyword id="KW-0325">Glycoprotein</keyword>
<keyword id="KW-0413">Isomerase</keyword>
<keyword id="KW-0472">Membrane</keyword>
<keyword id="KW-1185">Reference proteome</keyword>
<keyword id="KW-0697">Rotamase</keyword>
<keyword id="KW-0732">Signal</keyword>
<keyword id="KW-0812">Transmembrane</keyword>
<keyword id="KW-1133">Transmembrane helix</keyword>
<dbReference type="EC" id="5.2.1.8"/>
<dbReference type="EMBL" id="DS231666">
    <property type="protein sequence ID" value="ESU13704.1"/>
    <property type="molecule type" value="Genomic_DNA"/>
</dbReference>
<dbReference type="EMBL" id="HG970335">
    <property type="protein sequence ID" value="CEF84322.1"/>
    <property type="molecule type" value="Genomic_DNA"/>
</dbReference>
<dbReference type="RefSeq" id="XP_011327211.1">
    <molecule id="Q4I5R9-1"/>
    <property type="nucleotide sequence ID" value="XM_011328909.1"/>
</dbReference>
<dbReference type="SMR" id="Q4I5R9"/>
<dbReference type="FunCoup" id="Q4I5R9">
    <property type="interactions" value="246"/>
</dbReference>
<dbReference type="STRING" id="229533.Q4I5R9"/>
<dbReference type="GlyCosmos" id="Q4I5R9">
    <property type="glycosylation" value="1 site, No reported glycans"/>
</dbReference>
<dbReference type="GeneID" id="23554516"/>
<dbReference type="KEGG" id="fgr:FGSG_07439"/>
<dbReference type="VEuPathDB" id="FungiDB:FGRAMPH1_01G24825"/>
<dbReference type="eggNOG" id="KOG0880">
    <property type="taxonomic scope" value="Eukaryota"/>
</dbReference>
<dbReference type="HOGENOM" id="CLU_012062_4_1_1"/>
<dbReference type="InParanoid" id="Q4I5R9"/>
<dbReference type="OrthoDB" id="112370at110618"/>
<dbReference type="Proteomes" id="UP000070720">
    <property type="component" value="Chromosome 4"/>
</dbReference>
<dbReference type="GO" id="GO:0005788">
    <property type="term" value="C:endoplasmic reticulum lumen"/>
    <property type="evidence" value="ECO:0007669"/>
    <property type="project" value="UniProtKB-SubCell"/>
</dbReference>
<dbReference type="GO" id="GO:0000324">
    <property type="term" value="C:fungal-type vacuole"/>
    <property type="evidence" value="ECO:0007669"/>
    <property type="project" value="TreeGrafter"/>
</dbReference>
<dbReference type="GO" id="GO:0016020">
    <property type="term" value="C:membrane"/>
    <property type="evidence" value="ECO:0007669"/>
    <property type="project" value="UniProtKB-SubCell"/>
</dbReference>
<dbReference type="GO" id="GO:0016018">
    <property type="term" value="F:cyclosporin A binding"/>
    <property type="evidence" value="ECO:0007669"/>
    <property type="project" value="TreeGrafter"/>
</dbReference>
<dbReference type="GO" id="GO:0003755">
    <property type="term" value="F:peptidyl-prolyl cis-trans isomerase activity"/>
    <property type="evidence" value="ECO:0007669"/>
    <property type="project" value="UniProtKB-KW"/>
</dbReference>
<dbReference type="GO" id="GO:0006457">
    <property type="term" value="P:protein folding"/>
    <property type="evidence" value="ECO:0007669"/>
    <property type="project" value="InterPro"/>
</dbReference>
<dbReference type="FunFam" id="2.40.100.10:FF:000001">
    <property type="entry name" value="Peptidyl-prolyl cis-trans isomerase"/>
    <property type="match status" value="1"/>
</dbReference>
<dbReference type="Gene3D" id="2.40.100.10">
    <property type="entry name" value="Cyclophilin-like"/>
    <property type="match status" value="1"/>
</dbReference>
<dbReference type="InterPro" id="IPR029000">
    <property type="entry name" value="Cyclophilin-like_dom_sf"/>
</dbReference>
<dbReference type="InterPro" id="IPR020892">
    <property type="entry name" value="Cyclophilin-type_PPIase_CS"/>
</dbReference>
<dbReference type="InterPro" id="IPR002130">
    <property type="entry name" value="Cyclophilin-type_PPIase_dom"/>
</dbReference>
<dbReference type="PANTHER" id="PTHR11071">
    <property type="entry name" value="PEPTIDYL-PROLYL CIS-TRANS ISOMERASE"/>
    <property type="match status" value="1"/>
</dbReference>
<dbReference type="PANTHER" id="PTHR11071:SF561">
    <property type="entry name" value="PEPTIDYL-PROLYL CIS-TRANS ISOMERASE D-RELATED"/>
    <property type="match status" value="1"/>
</dbReference>
<dbReference type="Pfam" id="PF00160">
    <property type="entry name" value="Pro_isomerase"/>
    <property type="match status" value="1"/>
</dbReference>
<dbReference type="PRINTS" id="PR00153">
    <property type="entry name" value="CSAPPISMRASE"/>
</dbReference>
<dbReference type="SUPFAM" id="SSF50891">
    <property type="entry name" value="Cyclophilin-like"/>
    <property type="match status" value="1"/>
</dbReference>
<dbReference type="PROSITE" id="PS00170">
    <property type="entry name" value="CSA_PPIASE_1"/>
    <property type="match status" value="1"/>
</dbReference>
<dbReference type="PROSITE" id="PS50072">
    <property type="entry name" value="CSA_PPIASE_2"/>
    <property type="match status" value="1"/>
</dbReference>
<sequence length="248" mass="26883">MFNLRRLFASALFLGLGLLFLAQTAEAAKGPKITHKVYFDITQGDQPLGRVVMGLYGKTVPETTENFRALATGEKGFGYEGSAFHRVIKNFMIQGGDFTKGDGTGGKSIYGDRFKDENFKLKHTKKGLLSMANAGRDTNGSQFFITTVVTSWLDGKHVVFGEVLEGYEIIEKIENSKTGAADRPVEAVKIAKSGELDVPPEGLVGTSEFAAEEVASAGWSPMQKAGLFAIFAGVLFVGLRSARQHSRF</sequence>
<gene>
    <name type="primary">CPR2</name>
    <name type="ORF">FGRRES_07439</name>
    <name type="ORF">FGSG_07439</name>
</gene>